<comment type="function">
    <text evidence="1">One of the primary rRNA binding proteins, it binds specifically to the 5'-end of 16S ribosomal RNA.</text>
</comment>
<comment type="subunit">
    <text evidence="1">Part of the 30S ribosomal subunit.</text>
</comment>
<comment type="similarity">
    <text evidence="1">Belongs to the universal ribosomal protein uS17 family.</text>
</comment>
<evidence type="ECO:0000255" key="1">
    <source>
        <dbReference type="HAMAP-Rule" id="MF_01345"/>
    </source>
</evidence>
<evidence type="ECO:0000305" key="2"/>
<dbReference type="EMBL" id="CU928162">
    <property type="protein sequence ID" value="CAR09969.1"/>
    <property type="molecule type" value="Genomic_DNA"/>
</dbReference>
<dbReference type="RefSeq" id="WP_000130100.1">
    <property type="nucleotide sequence ID" value="NC_011745.1"/>
</dbReference>
<dbReference type="SMR" id="B7N0V1"/>
<dbReference type="GeneID" id="93778676"/>
<dbReference type="KEGG" id="ecq:ECED1_3974"/>
<dbReference type="HOGENOM" id="CLU_073626_1_1_6"/>
<dbReference type="Proteomes" id="UP000000748">
    <property type="component" value="Chromosome"/>
</dbReference>
<dbReference type="GO" id="GO:0022627">
    <property type="term" value="C:cytosolic small ribosomal subunit"/>
    <property type="evidence" value="ECO:0007669"/>
    <property type="project" value="TreeGrafter"/>
</dbReference>
<dbReference type="GO" id="GO:0019843">
    <property type="term" value="F:rRNA binding"/>
    <property type="evidence" value="ECO:0007669"/>
    <property type="project" value="UniProtKB-UniRule"/>
</dbReference>
<dbReference type="GO" id="GO:0003735">
    <property type="term" value="F:structural constituent of ribosome"/>
    <property type="evidence" value="ECO:0007669"/>
    <property type="project" value="InterPro"/>
</dbReference>
<dbReference type="GO" id="GO:0006412">
    <property type="term" value="P:translation"/>
    <property type="evidence" value="ECO:0007669"/>
    <property type="project" value="UniProtKB-UniRule"/>
</dbReference>
<dbReference type="CDD" id="cd00364">
    <property type="entry name" value="Ribosomal_uS17"/>
    <property type="match status" value="1"/>
</dbReference>
<dbReference type="FunFam" id="2.40.50.140:FF:000014">
    <property type="entry name" value="30S ribosomal protein S17"/>
    <property type="match status" value="1"/>
</dbReference>
<dbReference type="Gene3D" id="2.40.50.140">
    <property type="entry name" value="Nucleic acid-binding proteins"/>
    <property type="match status" value="1"/>
</dbReference>
<dbReference type="HAMAP" id="MF_01345_B">
    <property type="entry name" value="Ribosomal_uS17_B"/>
    <property type="match status" value="1"/>
</dbReference>
<dbReference type="InterPro" id="IPR012340">
    <property type="entry name" value="NA-bd_OB-fold"/>
</dbReference>
<dbReference type="InterPro" id="IPR000266">
    <property type="entry name" value="Ribosomal_uS17"/>
</dbReference>
<dbReference type="InterPro" id="IPR019984">
    <property type="entry name" value="Ribosomal_uS17_bact/chlr"/>
</dbReference>
<dbReference type="InterPro" id="IPR019979">
    <property type="entry name" value="Ribosomal_uS17_CS"/>
</dbReference>
<dbReference type="NCBIfam" id="NF004123">
    <property type="entry name" value="PRK05610.1"/>
    <property type="match status" value="1"/>
</dbReference>
<dbReference type="NCBIfam" id="TIGR03635">
    <property type="entry name" value="uS17_bact"/>
    <property type="match status" value="1"/>
</dbReference>
<dbReference type="PANTHER" id="PTHR10744">
    <property type="entry name" value="40S RIBOSOMAL PROTEIN S11 FAMILY MEMBER"/>
    <property type="match status" value="1"/>
</dbReference>
<dbReference type="PANTHER" id="PTHR10744:SF1">
    <property type="entry name" value="SMALL RIBOSOMAL SUBUNIT PROTEIN US17M"/>
    <property type="match status" value="1"/>
</dbReference>
<dbReference type="Pfam" id="PF00366">
    <property type="entry name" value="Ribosomal_S17"/>
    <property type="match status" value="1"/>
</dbReference>
<dbReference type="PRINTS" id="PR00973">
    <property type="entry name" value="RIBOSOMALS17"/>
</dbReference>
<dbReference type="SUPFAM" id="SSF50249">
    <property type="entry name" value="Nucleic acid-binding proteins"/>
    <property type="match status" value="1"/>
</dbReference>
<dbReference type="PROSITE" id="PS00056">
    <property type="entry name" value="RIBOSOMAL_S17"/>
    <property type="match status" value="1"/>
</dbReference>
<organism>
    <name type="scientific">Escherichia coli O81 (strain ED1a)</name>
    <dbReference type="NCBI Taxonomy" id="585397"/>
    <lineage>
        <taxon>Bacteria</taxon>
        <taxon>Pseudomonadati</taxon>
        <taxon>Pseudomonadota</taxon>
        <taxon>Gammaproteobacteria</taxon>
        <taxon>Enterobacterales</taxon>
        <taxon>Enterobacteriaceae</taxon>
        <taxon>Escherichia</taxon>
    </lineage>
</organism>
<accession>B7N0V1</accession>
<protein>
    <recommendedName>
        <fullName evidence="1">Small ribosomal subunit protein uS17</fullName>
    </recommendedName>
    <alternativeName>
        <fullName evidence="2">30S ribosomal protein S17</fullName>
    </alternativeName>
</protein>
<keyword id="KW-0687">Ribonucleoprotein</keyword>
<keyword id="KW-0689">Ribosomal protein</keyword>
<keyword id="KW-0694">RNA-binding</keyword>
<keyword id="KW-0699">rRNA-binding</keyword>
<name>RS17_ECO81</name>
<sequence>MTDKIRTLQGRVVSDKMEKSIVVAIERFVKHPIYGKFIKRTTKLHVHDENNECGIGDVVEIRECRPLSKTKSWTLVRVVEKAVL</sequence>
<reference key="1">
    <citation type="journal article" date="2009" name="PLoS Genet.">
        <title>Organised genome dynamics in the Escherichia coli species results in highly diverse adaptive paths.</title>
        <authorList>
            <person name="Touchon M."/>
            <person name="Hoede C."/>
            <person name="Tenaillon O."/>
            <person name="Barbe V."/>
            <person name="Baeriswyl S."/>
            <person name="Bidet P."/>
            <person name="Bingen E."/>
            <person name="Bonacorsi S."/>
            <person name="Bouchier C."/>
            <person name="Bouvet O."/>
            <person name="Calteau A."/>
            <person name="Chiapello H."/>
            <person name="Clermont O."/>
            <person name="Cruveiller S."/>
            <person name="Danchin A."/>
            <person name="Diard M."/>
            <person name="Dossat C."/>
            <person name="Karoui M.E."/>
            <person name="Frapy E."/>
            <person name="Garry L."/>
            <person name="Ghigo J.M."/>
            <person name="Gilles A.M."/>
            <person name="Johnson J."/>
            <person name="Le Bouguenec C."/>
            <person name="Lescat M."/>
            <person name="Mangenot S."/>
            <person name="Martinez-Jehanne V."/>
            <person name="Matic I."/>
            <person name="Nassif X."/>
            <person name="Oztas S."/>
            <person name="Petit M.A."/>
            <person name="Pichon C."/>
            <person name="Rouy Z."/>
            <person name="Ruf C.S."/>
            <person name="Schneider D."/>
            <person name="Tourret J."/>
            <person name="Vacherie B."/>
            <person name="Vallenet D."/>
            <person name="Medigue C."/>
            <person name="Rocha E.P.C."/>
            <person name="Denamur E."/>
        </authorList>
    </citation>
    <scope>NUCLEOTIDE SEQUENCE [LARGE SCALE GENOMIC DNA]</scope>
    <source>
        <strain>ED1a</strain>
    </source>
</reference>
<proteinExistence type="inferred from homology"/>
<gene>
    <name evidence="1" type="primary">rpsQ</name>
    <name type="ordered locus">ECED1_3974</name>
</gene>
<feature type="chain" id="PRO_1000166480" description="Small ribosomal subunit protein uS17">
    <location>
        <begin position="1"/>
        <end position="84"/>
    </location>
</feature>